<gene>
    <name evidence="1" type="primary">rimM</name>
    <name type="ordered locus">lwe1812</name>
</gene>
<keyword id="KW-0143">Chaperone</keyword>
<keyword id="KW-0963">Cytoplasm</keyword>
<keyword id="KW-0690">Ribosome biogenesis</keyword>
<keyword id="KW-0698">rRNA processing</keyword>
<reference key="1">
    <citation type="journal article" date="2006" name="J. Bacteriol.">
        <title>Whole-genome sequence of Listeria welshimeri reveals common steps in genome reduction with Listeria innocua as compared to Listeria monocytogenes.</title>
        <authorList>
            <person name="Hain T."/>
            <person name="Steinweg C."/>
            <person name="Kuenne C.T."/>
            <person name="Billion A."/>
            <person name="Ghai R."/>
            <person name="Chatterjee S.S."/>
            <person name="Domann E."/>
            <person name="Kaerst U."/>
            <person name="Goesmann A."/>
            <person name="Bekel T."/>
            <person name="Bartels D."/>
            <person name="Kaiser O."/>
            <person name="Meyer F."/>
            <person name="Puehler A."/>
            <person name="Weisshaar B."/>
            <person name="Wehland J."/>
            <person name="Liang C."/>
            <person name="Dandekar T."/>
            <person name="Lampidis R."/>
            <person name="Kreft J."/>
            <person name="Goebel W."/>
            <person name="Chakraborty T."/>
        </authorList>
    </citation>
    <scope>NUCLEOTIDE SEQUENCE [LARGE SCALE GENOMIC DNA]</scope>
    <source>
        <strain>ATCC 35897 / DSM 20650 / CCUG 15529 / CIP 8149 / NCTC 11857 / SLCC 5334 / V8</strain>
    </source>
</reference>
<proteinExistence type="inferred from homology"/>
<organism>
    <name type="scientific">Listeria welshimeri serovar 6b (strain ATCC 35897 / DSM 20650 / CCUG 15529 / CIP 8149 / NCTC 11857 / SLCC 5334 / V8)</name>
    <dbReference type="NCBI Taxonomy" id="386043"/>
    <lineage>
        <taxon>Bacteria</taxon>
        <taxon>Bacillati</taxon>
        <taxon>Bacillota</taxon>
        <taxon>Bacilli</taxon>
        <taxon>Bacillales</taxon>
        <taxon>Listeriaceae</taxon>
        <taxon>Listeria</taxon>
    </lineage>
</organism>
<dbReference type="EMBL" id="AM263198">
    <property type="protein sequence ID" value="CAK21230.1"/>
    <property type="molecule type" value="Genomic_DNA"/>
</dbReference>
<dbReference type="SMR" id="A0AJP8"/>
<dbReference type="STRING" id="386043.lwe1812"/>
<dbReference type="KEGG" id="lwe:lwe1812"/>
<dbReference type="eggNOG" id="COG0806">
    <property type="taxonomic scope" value="Bacteria"/>
</dbReference>
<dbReference type="HOGENOM" id="CLU_077636_3_1_9"/>
<dbReference type="Proteomes" id="UP000000779">
    <property type="component" value="Chromosome"/>
</dbReference>
<dbReference type="GO" id="GO:0005737">
    <property type="term" value="C:cytoplasm"/>
    <property type="evidence" value="ECO:0007669"/>
    <property type="project" value="UniProtKB-SubCell"/>
</dbReference>
<dbReference type="GO" id="GO:0005840">
    <property type="term" value="C:ribosome"/>
    <property type="evidence" value="ECO:0007669"/>
    <property type="project" value="InterPro"/>
</dbReference>
<dbReference type="GO" id="GO:0043022">
    <property type="term" value="F:ribosome binding"/>
    <property type="evidence" value="ECO:0007669"/>
    <property type="project" value="InterPro"/>
</dbReference>
<dbReference type="GO" id="GO:0042274">
    <property type="term" value="P:ribosomal small subunit biogenesis"/>
    <property type="evidence" value="ECO:0007669"/>
    <property type="project" value="UniProtKB-UniRule"/>
</dbReference>
<dbReference type="GO" id="GO:0006364">
    <property type="term" value="P:rRNA processing"/>
    <property type="evidence" value="ECO:0007669"/>
    <property type="project" value="UniProtKB-UniRule"/>
</dbReference>
<dbReference type="Gene3D" id="2.30.30.240">
    <property type="entry name" value="PRC-barrel domain"/>
    <property type="match status" value="1"/>
</dbReference>
<dbReference type="Gene3D" id="2.40.30.60">
    <property type="entry name" value="RimM"/>
    <property type="match status" value="1"/>
</dbReference>
<dbReference type="HAMAP" id="MF_00014">
    <property type="entry name" value="Ribosome_mat_RimM"/>
    <property type="match status" value="1"/>
</dbReference>
<dbReference type="InterPro" id="IPR027275">
    <property type="entry name" value="PRC-brl_dom"/>
</dbReference>
<dbReference type="InterPro" id="IPR011033">
    <property type="entry name" value="PRC_barrel-like_sf"/>
</dbReference>
<dbReference type="InterPro" id="IPR011961">
    <property type="entry name" value="RimM"/>
</dbReference>
<dbReference type="InterPro" id="IPR002676">
    <property type="entry name" value="RimM_N"/>
</dbReference>
<dbReference type="InterPro" id="IPR036976">
    <property type="entry name" value="RimM_N_sf"/>
</dbReference>
<dbReference type="InterPro" id="IPR009000">
    <property type="entry name" value="Transl_B-barrel_sf"/>
</dbReference>
<dbReference type="NCBIfam" id="TIGR02273">
    <property type="entry name" value="16S_RimM"/>
    <property type="match status" value="1"/>
</dbReference>
<dbReference type="PANTHER" id="PTHR33692">
    <property type="entry name" value="RIBOSOME MATURATION FACTOR RIMM"/>
    <property type="match status" value="1"/>
</dbReference>
<dbReference type="PANTHER" id="PTHR33692:SF1">
    <property type="entry name" value="RIBOSOME MATURATION FACTOR RIMM"/>
    <property type="match status" value="1"/>
</dbReference>
<dbReference type="Pfam" id="PF05239">
    <property type="entry name" value="PRC"/>
    <property type="match status" value="1"/>
</dbReference>
<dbReference type="Pfam" id="PF01782">
    <property type="entry name" value="RimM"/>
    <property type="match status" value="1"/>
</dbReference>
<dbReference type="SUPFAM" id="SSF50346">
    <property type="entry name" value="PRC-barrel domain"/>
    <property type="match status" value="1"/>
</dbReference>
<dbReference type="SUPFAM" id="SSF50447">
    <property type="entry name" value="Translation proteins"/>
    <property type="match status" value="1"/>
</dbReference>
<protein>
    <recommendedName>
        <fullName evidence="1">Ribosome maturation factor RimM</fullName>
    </recommendedName>
</protein>
<name>RIMM_LISW6</name>
<evidence type="ECO:0000255" key="1">
    <source>
        <dbReference type="HAMAP-Rule" id="MF_00014"/>
    </source>
</evidence>
<comment type="function">
    <text evidence="1">An accessory protein needed during the final step in the assembly of 30S ribosomal subunit, possibly for assembly of the head region. Essential for efficient processing of 16S rRNA. May be needed both before and after RbfA during the maturation of 16S rRNA. It has affinity for free ribosomal 30S subunits but not for 70S ribosomes.</text>
</comment>
<comment type="subunit">
    <text evidence="1">Binds ribosomal protein uS19.</text>
</comment>
<comment type="subcellular location">
    <subcellularLocation>
        <location evidence="1">Cytoplasm</location>
    </subcellularLocation>
</comment>
<comment type="domain">
    <text evidence="1">The PRC barrel domain binds ribosomal protein uS19.</text>
</comment>
<comment type="similarity">
    <text evidence="1">Belongs to the RimM family.</text>
</comment>
<sequence>MYNVGKIVNTHGLIGEIRVIATTDFPEERFQVGNTVYLFEKNSKKPEKLIIRSHRKHKNFDLLMFEGLTGIHQVERMKEGVLKIKETQQTDLEENEFYFHEIIGCTVVTTDGEELGEIIEILTPGANDVWVVKGADKKEKLIPYIADVVKEINTNDKKITIEVMEGLLD</sequence>
<accession>A0AJP8</accession>
<feature type="chain" id="PRO_1000001192" description="Ribosome maturation factor RimM">
    <location>
        <begin position="1"/>
        <end position="169"/>
    </location>
</feature>
<feature type="domain" description="PRC barrel" evidence="1">
    <location>
        <begin position="94"/>
        <end position="167"/>
    </location>
</feature>